<evidence type="ECO:0000250" key="1">
    <source>
        <dbReference type="UniProtKB" id="Q8IXM3"/>
    </source>
</evidence>
<evidence type="ECO:0000269" key="2">
    <source>
    </source>
</evidence>
<evidence type="ECO:0000305" key="3"/>
<organism>
    <name type="scientific">Rattus norvegicus</name>
    <name type="common">Rat</name>
    <dbReference type="NCBI Taxonomy" id="10116"/>
    <lineage>
        <taxon>Eukaryota</taxon>
        <taxon>Metazoa</taxon>
        <taxon>Chordata</taxon>
        <taxon>Craniata</taxon>
        <taxon>Vertebrata</taxon>
        <taxon>Euteleostomi</taxon>
        <taxon>Mammalia</taxon>
        <taxon>Eutheria</taxon>
        <taxon>Euarchontoglires</taxon>
        <taxon>Glires</taxon>
        <taxon>Rodentia</taxon>
        <taxon>Myomorpha</taxon>
        <taxon>Muroidea</taxon>
        <taxon>Muridae</taxon>
        <taxon>Murinae</taxon>
        <taxon>Rattus</taxon>
    </lineage>
</organism>
<sequence length="134" mass="15193">MGFLTAVTQGLVRGADRMSKWTSKRGPRTFTKSRGAKKTGFYTNRKFVQIKEMVPEFVVPDLTGFKLKPYVNYRAPAGIDTPLTAKALFLETVAPAIEKDFKEGTFDANNLEKYGFEPTQEGKLFQLYPKNFPR</sequence>
<accession>Q5BJX1</accession>
<dbReference type="EMBL" id="BC091293">
    <property type="protein sequence ID" value="AAH91293.1"/>
    <property type="molecule type" value="mRNA"/>
</dbReference>
<dbReference type="RefSeq" id="NP_001013444.1">
    <property type="nucleotide sequence ID" value="NM_001013426.1"/>
</dbReference>
<dbReference type="SMR" id="Q5BJX1"/>
<dbReference type="FunCoup" id="Q5BJX1">
    <property type="interactions" value="161"/>
</dbReference>
<dbReference type="IntAct" id="Q5BJX1">
    <property type="interactions" value="1"/>
</dbReference>
<dbReference type="STRING" id="10116.ENSRNOP00000042070"/>
<dbReference type="iPTMnet" id="Q5BJX1"/>
<dbReference type="PhosphoSitePlus" id="Q5BJX1"/>
<dbReference type="PaxDb" id="10116-ENSRNOP00000042070"/>
<dbReference type="Ensembl" id="ENSRNOT00000110175.1">
    <property type="protein sequence ID" value="ENSRNOP00000095947.1"/>
    <property type="gene ID" value="ENSRNOG00000063489.1"/>
</dbReference>
<dbReference type="GeneID" id="296551"/>
<dbReference type="KEGG" id="rno:296551"/>
<dbReference type="UCSC" id="RGD:1310241">
    <property type="organism name" value="rat"/>
</dbReference>
<dbReference type="AGR" id="RGD:1310241"/>
<dbReference type="CTD" id="64975"/>
<dbReference type="RGD" id="1310241">
    <property type="gene designation" value="Mrpl41"/>
</dbReference>
<dbReference type="eggNOG" id="KOG4756">
    <property type="taxonomic scope" value="Eukaryota"/>
</dbReference>
<dbReference type="GeneTree" id="ENSGT00390000013158"/>
<dbReference type="HOGENOM" id="CLU_155983_0_0_1"/>
<dbReference type="InParanoid" id="Q5BJX1"/>
<dbReference type="OMA" id="DRMSAWT"/>
<dbReference type="OrthoDB" id="408933at2759"/>
<dbReference type="PhylomeDB" id="Q5BJX1"/>
<dbReference type="TreeFam" id="TF325007"/>
<dbReference type="Reactome" id="R-RNO-5389840">
    <property type="pathway name" value="Mitochondrial translation elongation"/>
</dbReference>
<dbReference type="Reactome" id="R-RNO-5419276">
    <property type="pathway name" value="Mitochondrial translation termination"/>
</dbReference>
<dbReference type="PRO" id="PR:Q5BJX1"/>
<dbReference type="Proteomes" id="UP000002494">
    <property type="component" value="Chromosome 3"/>
</dbReference>
<dbReference type="Bgee" id="ENSRNOG00000029875">
    <property type="expression patterns" value="Expressed in heart and 19 other cell types or tissues"/>
</dbReference>
<dbReference type="GO" id="GO:0005762">
    <property type="term" value="C:mitochondrial large ribosomal subunit"/>
    <property type="evidence" value="ECO:0000250"/>
    <property type="project" value="UniProtKB"/>
</dbReference>
<dbReference type="GO" id="GO:1990904">
    <property type="term" value="C:ribonucleoprotein complex"/>
    <property type="evidence" value="ECO:0000250"/>
    <property type="project" value="UniProtKB"/>
</dbReference>
<dbReference type="GO" id="GO:0003735">
    <property type="term" value="F:structural constituent of ribosome"/>
    <property type="evidence" value="ECO:0000250"/>
    <property type="project" value="UniProtKB"/>
</dbReference>
<dbReference type="GO" id="GO:0006915">
    <property type="term" value="P:apoptotic process"/>
    <property type="evidence" value="ECO:0007669"/>
    <property type="project" value="UniProtKB-KW"/>
</dbReference>
<dbReference type="GO" id="GO:0006412">
    <property type="term" value="P:translation"/>
    <property type="evidence" value="ECO:0000250"/>
    <property type="project" value="UniProtKB"/>
</dbReference>
<dbReference type="InterPro" id="IPR019189">
    <property type="entry name" value="Ribosomal_mL41"/>
</dbReference>
<dbReference type="PANTHER" id="PTHR21338:SF0">
    <property type="entry name" value="LARGE RIBOSOMAL SUBUNIT PROTEIN ML41"/>
    <property type="match status" value="1"/>
</dbReference>
<dbReference type="PANTHER" id="PTHR21338">
    <property type="entry name" value="MITOCHONDRIAL RIBOSOMAL PROTEIN L41"/>
    <property type="match status" value="1"/>
</dbReference>
<dbReference type="Pfam" id="PF09809">
    <property type="entry name" value="MRP-L27"/>
    <property type="match status" value="1"/>
</dbReference>
<gene>
    <name type="primary">Mrpl41</name>
</gene>
<comment type="function">
    <text evidence="1">Component of the mitochondrial ribosome large subunit. Also involved in apoptosis and cell cycle. Enhances p53/TP53 stability, thereby contributing to p53/TP53-induced apoptosis in response to growth-inhibitory condition. Enhances p53/TP53 translocation to the mitochondria. Has the ability to arrest the cell cycle at the G1 phase, possibly by stabilizing the CDKN1A and CDKN1B (p27Kip1) proteins.</text>
</comment>
<comment type="subunit">
    <text evidence="1 2">Component of the mitochondrial ribosome large subunit (39S) which comprises a 16S rRNA and about 50 distinct proteins. Interacts with BCL2 (By similarity). Was also identified in the 28S mitochondrial ribosome (PubMed:9857009).</text>
</comment>
<comment type="subcellular location">
    <subcellularLocation>
        <location evidence="2">Mitochondrion</location>
    </subcellularLocation>
</comment>
<comment type="similarity">
    <text evidence="3">Belongs to the mitochondrion-specific ribosomal protein mL41 family.</text>
</comment>
<protein>
    <recommendedName>
        <fullName evidence="3">Large ribosomal subunit protein mL41</fullName>
    </recommendedName>
    <alternativeName>
        <fullName>39S ribosomal protein L41, mitochondrial</fullName>
        <shortName>L41mt</shortName>
        <shortName>MRP-L41</shortName>
    </alternativeName>
</protein>
<feature type="transit peptide" description="Mitochondrion" evidence="2">
    <location>
        <begin position="1"/>
        <end position="13"/>
    </location>
</feature>
<feature type="chain" id="PRO_0000273230" description="Large ribosomal subunit protein mL41">
    <location>
        <begin position="14"/>
        <end position="134"/>
    </location>
</feature>
<feature type="sequence conflict" description="In Ref. 2; AA sequence." evidence="3" ref="2">
    <original>W</original>
    <variation>R</variation>
    <location>
        <position position="21"/>
    </location>
</feature>
<keyword id="KW-0053">Apoptosis</keyword>
<keyword id="KW-0131">Cell cycle</keyword>
<keyword id="KW-0903">Direct protein sequencing</keyword>
<keyword id="KW-0496">Mitochondrion</keyword>
<keyword id="KW-1185">Reference proteome</keyword>
<keyword id="KW-0687">Ribonucleoprotein</keyword>
<keyword id="KW-0689">Ribosomal protein</keyword>
<keyword id="KW-0809">Transit peptide</keyword>
<proteinExistence type="evidence at protein level"/>
<name>RM41_RAT</name>
<reference key="1">
    <citation type="journal article" date="2004" name="Genome Res.">
        <title>The status, quality, and expansion of the NIH full-length cDNA project: the Mammalian Gene Collection (MGC).</title>
        <authorList>
            <consortium name="The MGC Project Team"/>
        </authorList>
    </citation>
    <scope>NUCLEOTIDE SEQUENCE [LARGE SCALE MRNA]</scope>
    <source>
        <tissue>Ovary</tissue>
    </source>
</reference>
<reference key="2">
    <citation type="journal article" date="1998" name="J. Biol. Chem.">
        <title>Mammalian mitochondrial ribosomal proteins. N-terminal amino acid sequencing, characterization, and identification of corresponding gene sequences.</title>
        <authorList>
            <person name="Goldschmidt-Reisin S."/>
            <person name="Kitakawa M."/>
            <person name="Herfurth E."/>
            <person name="Wittmann-Liebold B."/>
            <person name="Grohmann L."/>
            <person name="Graack H.-R."/>
        </authorList>
    </citation>
    <scope>PROTEIN SEQUENCE OF 14-29</scope>
    <scope>IDENTIFICATION IN THE 28S MITOCHONDRIAL RIBOSOME</scope>
    <scope>SUBCELLULAR LOCATION</scope>
</reference>